<keyword id="KW-0145">Chemotaxis</keyword>
<keyword id="KW-0963">Cytoplasm</keyword>
<keyword id="KW-0378">Hydrolase</keyword>
<keyword id="KW-0597">Phosphoprotein</keyword>
<comment type="function">
    <text evidence="1">Involved in chemotaxis. Part of a chemotaxis signal transduction system that modulates chemotaxis in response to various stimuli. Catalyzes the demethylation of specific methylglutamate residues introduced into the chemoreceptors (methyl-accepting chemotaxis proteins or MCP) by CheR. Also mediates the irreversible deamidation of specific glutamine residues to glutamic acid.</text>
</comment>
<comment type="catalytic activity">
    <reaction evidence="1">
        <text>[protein]-L-glutamate 5-O-methyl ester + H2O = L-glutamyl-[protein] + methanol + H(+)</text>
        <dbReference type="Rhea" id="RHEA:23236"/>
        <dbReference type="Rhea" id="RHEA-COMP:10208"/>
        <dbReference type="Rhea" id="RHEA-COMP:10311"/>
        <dbReference type="ChEBI" id="CHEBI:15377"/>
        <dbReference type="ChEBI" id="CHEBI:15378"/>
        <dbReference type="ChEBI" id="CHEBI:17790"/>
        <dbReference type="ChEBI" id="CHEBI:29973"/>
        <dbReference type="ChEBI" id="CHEBI:82795"/>
        <dbReference type="EC" id="3.1.1.61"/>
    </reaction>
</comment>
<comment type="catalytic activity">
    <reaction evidence="1">
        <text>L-glutaminyl-[protein] + H2O = L-glutamyl-[protein] + NH4(+)</text>
        <dbReference type="Rhea" id="RHEA:16441"/>
        <dbReference type="Rhea" id="RHEA-COMP:10207"/>
        <dbReference type="Rhea" id="RHEA-COMP:10208"/>
        <dbReference type="ChEBI" id="CHEBI:15377"/>
        <dbReference type="ChEBI" id="CHEBI:28938"/>
        <dbReference type="ChEBI" id="CHEBI:29973"/>
        <dbReference type="ChEBI" id="CHEBI:30011"/>
        <dbReference type="EC" id="3.5.1.44"/>
    </reaction>
</comment>
<comment type="subcellular location">
    <subcellularLocation>
        <location evidence="1">Cytoplasm</location>
    </subcellularLocation>
</comment>
<comment type="domain">
    <text evidence="1">Contains a C-terminal catalytic domain, and an N-terminal region which modulates catalytic activity.</text>
</comment>
<comment type="PTM">
    <text evidence="1">Phosphorylated by CheA. Phosphorylation of the N-terminal regulatory domain activates the methylesterase activity.</text>
</comment>
<comment type="similarity">
    <text evidence="1">Belongs to the CheB family.</text>
</comment>
<comment type="sequence caution" evidence="2">
    <conflict type="erroneous initiation">
        <sequence resource="EMBL-CDS" id="ABC35113"/>
    </conflict>
</comment>
<proteinExistence type="inferred from homology"/>
<gene>
    <name evidence="1" type="primary">cheB2</name>
    <name type="ordered locus">BTH_II0161</name>
</gene>
<dbReference type="EC" id="3.1.1.61" evidence="1"/>
<dbReference type="EC" id="3.5.1.44" evidence="1"/>
<dbReference type="EMBL" id="CP000085">
    <property type="protein sequence ID" value="ABC35113.1"/>
    <property type="status" value="ALT_INIT"/>
    <property type="molecule type" value="Genomic_DNA"/>
</dbReference>
<dbReference type="RefSeq" id="WP_025370065.1">
    <property type="nucleotide sequence ID" value="NZ_CM000439.1"/>
</dbReference>
<dbReference type="SMR" id="Q2T8Y6"/>
<dbReference type="KEGG" id="bte:BTH_II0161"/>
<dbReference type="HOGENOM" id="CLU_000445_51_0_4"/>
<dbReference type="Proteomes" id="UP000001930">
    <property type="component" value="Chromosome II"/>
</dbReference>
<dbReference type="GO" id="GO:0005737">
    <property type="term" value="C:cytoplasm"/>
    <property type="evidence" value="ECO:0007669"/>
    <property type="project" value="UniProtKB-SubCell"/>
</dbReference>
<dbReference type="GO" id="GO:0000156">
    <property type="term" value="F:phosphorelay response regulator activity"/>
    <property type="evidence" value="ECO:0007669"/>
    <property type="project" value="InterPro"/>
</dbReference>
<dbReference type="GO" id="GO:0008984">
    <property type="term" value="F:protein-glutamate methylesterase activity"/>
    <property type="evidence" value="ECO:0007669"/>
    <property type="project" value="UniProtKB-UniRule"/>
</dbReference>
<dbReference type="GO" id="GO:0050568">
    <property type="term" value="F:protein-glutamine glutaminase activity"/>
    <property type="evidence" value="ECO:0007669"/>
    <property type="project" value="UniProtKB-UniRule"/>
</dbReference>
<dbReference type="GO" id="GO:0006935">
    <property type="term" value="P:chemotaxis"/>
    <property type="evidence" value="ECO:0007669"/>
    <property type="project" value="UniProtKB-UniRule"/>
</dbReference>
<dbReference type="CDD" id="cd16432">
    <property type="entry name" value="CheB_Rec"/>
    <property type="match status" value="1"/>
</dbReference>
<dbReference type="CDD" id="cd17541">
    <property type="entry name" value="REC_CheB-like"/>
    <property type="match status" value="1"/>
</dbReference>
<dbReference type="Gene3D" id="3.40.50.2300">
    <property type="match status" value="1"/>
</dbReference>
<dbReference type="Gene3D" id="3.40.50.180">
    <property type="entry name" value="Methylesterase CheB, C-terminal domain"/>
    <property type="match status" value="1"/>
</dbReference>
<dbReference type="HAMAP" id="MF_00099">
    <property type="entry name" value="CheB_chemtxs"/>
    <property type="match status" value="1"/>
</dbReference>
<dbReference type="InterPro" id="IPR008248">
    <property type="entry name" value="CheB-like"/>
</dbReference>
<dbReference type="InterPro" id="IPR035909">
    <property type="entry name" value="CheB_C"/>
</dbReference>
<dbReference type="InterPro" id="IPR011006">
    <property type="entry name" value="CheY-like_superfamily"/>
</dbReference>
<dbReference type="InterPro" id="IPR000673">
    <property type="entry name" value="Sig_transdc_resp-reg_Me-estase"/>
</dbReference>
<dbReference type="InterPro" id="IPR001789">
    <property type="entry name" value="Sig_transdc_resp-reg_receiver"/>
</dbReference>
<dbReference type="NCBIfam" id="NF001965">
    <property type="entry name" value="PRK00742.1"/>
    <property type="match status" value="1"/>
</dbReference>
<dbReference type="NCBIfam" id="NF009206">
    <property type="entry name" value="PRK12555.1"/>
    <property type="match status" value="1"/>
</dbReference>
<dbReference type="PANTHER" id="PTHR42872">
    <property type="entry name" value="PROTEIN-GLUTAMATE METHYLESTERASE/PROTEIN-GLUTAMINE GLUTAMINASE"/>
    <property type="match status" value="1"/>
</dbReference>
<dbReference type="PANTHER" id="PTHR42872:SF6">
    <property type="entry name" value="PROTEIN-GLUTAMATE METHYLESTERASE_PROTEIN-GLUTAMINE GLUTAMINASE"/>
    <property type="match status" value="1"/>
</dbReference>
<dbReference type="Pfam" id="PF01339">
    <property type="entry name" value="CheB_methylest"/>
    <property type="match status" value="1"/>
</dbReference>
<dbReference type="Pfam" id="PF00072">
    <property type="entry name" value="Response_reg"/>
    <property type="match status" value="1"/>
</dbReference>
<dbReference type="PIRSF" id="PIRSF000876">
    <property type="entry name" value="RR_chemtxs_CheB"/>
    <property type="match status" value="1"/>
</dbReference>
<dbReference type="SMART" id="SM00448">
    <property type="entry name" value="REC"/>
    <property type="match status" value="1"/>
</dbReference>
<dbReference type="SUPFAM" id="SSF52172">
    <property type="entry name" value="CheY-like"/>
    <property type="match status" value="1"/>
</dbReference>
<dbReference type="SUPFAM" id="SSF52738">
    <property type="entry name" value="Methylesterase CheB, C-terminal domain"/>
    <property type="match status" value="1"/>
</dbReference>
<dbReference type="PROSITE" id="PS50122">
    <property type="entry name" value="CHEB"/>
    <property type="match status" value="1"/>
</dbReference>
<dbReference type="PROSITE" id="PS50110">
    <property type="entry name" value="RESPONSE_REGULATORY"/>
    <property type="match status" value="1"/>
</dbReference>
<sequence length="354" mass="37092">MIRVVVVDDSMSMRTLLERIINGCDGMTCVGAAEDASAAREMIRALDPDVVTLDVEMPGMDGLEFLRRMMLLKPTPTIMVSGRTTSGSDAALRALELGAVDVIAKPLLTRPADLADYARDIAELIRGAAAARVKGGALAAASSAGRERACAHRPRGAKKAGIAATRLSRVIAIGASTGGTEALRTVLQDMSGTPPPILICQHMPEGFTASFAARLDAICGIRVKEAEQGEPLHYGCAYVAPGHSHLSLAATGRLYVCRLEASPPVNRHRPSVDVLFDSVARLAGKRALGAILTGMGKDGAAGLLRMRASGARTFAQDEPSCVVFGMPKEAIAMGAVDEILPLARMGARLSEALQ</sequence>
<organism>
    <name type="scientific">Burkholderia thailandensis (strain ATCC 700388 / DSM 13276 / CCUG 48851 / CIP 106301 / E264)</name>
    <dbReference type="NCBI Taxonomy" id="271848"/>
    <lineage>
        <taxon>Bacteria</taxon>
        <taxon>Pseudomonadati</taxon>
        <taxon>Pseudomonadota</taxon>
        <taxon>Betaproteobacteria</taxon>
        <taxon>Burkholderiales</taxon>
        <taxon>Burkholderiaceae</taxon>
        <taxon>Burkholderia</taxon>
        <taxon>pseudomallei group</taxon>
    </lineage>
</organism>
<protein>
    <recommendedName>
        <fullName evidence="1">Protein-glutamate methylesterase/protein-glutamine glutaminase 2</fullName>
        <ecNumber evidence="1">3.1.1.61</ecNumber>
        <ecNumber evidence="1">3.5.1.44</ecNumber>
    </recommendedName>
</protein>
<reference key="1">
    <citation type="journal article" date="2005" name="BMC Genomics">
        <title>Bacterial genome adaptation to niches: divergence of the potential virulence genes in three Burkholderia species of different survival strategies.</title>
        <authorList>
            <person name="Kim H.S."/>
            <person name="Schell M.A."/>
            <person name="Yu Y."/>
            <person name="Ulrich R.L."/>
            <person name="Sarria S.H."/>
            <person name="Nierman W.C."/>
            <person name="DeShazer D."/>
        </authorList>
    </citation>
    <scope>NUCLEOTIDE SEQUENCE [LARGE SCALE GENOMIC DNA]</scope>
    <source>
        <strain>ATCC 700388 / DSM 13276 / CCUG 48851 / CIP 106301 / E264</strain>
    </source>
</reference>
<evidence type="ECO:0000255" key="1">
    <source>
        <dbReference type="HAMAP-Rule" id="MF_00099"/>
    </source>
</evidence>
<evidence type="ECO:0000305" key="2"/>
<accession>Q2T8Y6</accession>
<name>CHEB2_BURTA</name>
<feature type="chain" id="PRO_0000264268" description="Protein-glutamate methylesterase/protein-glutamine glutaminase 2">
    <location>
        <begin position="1"/>
        <end position="354"/>
    </location>
</feature>
<feature type="domain" description="Response regulatory" evidence="1">
    <location>
        <begin position="3"/>
        <end position="120"/>
    </location>
</feature>
<feature type="domain" description="CheB-type methylesterase" evidence="1">
    <location>
        <begin position="164"/>
        <end position="354"/>
    </location>
</feature>
<feature type="active site" evidence="1">
    <location>
        <position position="176"/>
    </location>
</feature>
<feature type="active site" evidence="1">
    <location>
        <position position="202"/>
    </location>
</feature>
<feature type="active site" evidence="1">
    <location>
        <position position="298"/>
    </location>
</feature>
<feature type="modified residue" description="4-aspartylphosphate" evidence="1">
    <location>
        <position position="54"/>
    </location>
</feature>